<dbReference type="EMBL" id="CP000036">
    <property type="protein sequence ID" value="ABB64779.1"/>
    <property type="molecule type" value="Genomic_DNA"/>
</dbReference>
<dbReference type="RefSeq" id="WP_000746156.1">
    <property type="nucleotide sequence ID" value="NC_007613.1"/>
</dbReference>
<dbReference type="SMR" id="Q326H9"/>
<dbReference type="GeneID" id="93777381"/>
<dbReference type="KEGG" id="sbo:SBO_0043"/>
<dbReference type="HOGENOM" id="CLU_009039_2_0_6"/>
<dbReference type="Proteomes" id="UP000007067">
    <property type="component" value="Chromosome"/>
</dbReference>
<dbReference type="GO" id="GO:0009279">
    <property type="term" value="C:cell outer membrane"/>
    <property type="evidence" value="ECO:0007669"/>
    <property type="project" value="UniProtKB-SubCell"/>
</dbReference>
<dbReference type="GO" id="GO:1990351">
    <property type="term" value="C:transporter complex"/>
    <property type="evidence" value="ECO:0007669"/>
    <property type="project" value="TreeGrafter"/>
</dbReference>
<dbReference type="GO" id="GO:0043165">
    <property type="term" value="P:Gram-negative-bacterium-type cell outer membrane assembly"/>
    <property type="evidence" value="ECO:0007669"/>
    <property type="project" value="UniProtKB-UniRule"/>
</dbReference>
<dbReference type="GO" id="GO:0015920">
    <property type="term" value="P:lipopolysaccharide transport"/>
    <property type="evidence" value="ECO:0007669"/>
    <property type="project" value="InterPro"/>
</dbReference>
<dbReference type="FunFam" id="2.60.450.10:FF:000003">
    <property type="entry name" value="LPS-assembly protein LptD"/>
    <property type="match status" value="1"/>
</dbReference>
<dbReference type="Gene3D" id="2.60.450.10">
    <property type="entry name" value="Lipopolysaccharide (LPS) transport protein A like domain"/>
    <property type="match status" value="1"/>
</dbReference>
<dbReference type="HAMAP" id="MF_01411">
    <property type="entry name" value="LPS_assembly_LptD"/>
    <property type="match status" value="1"/>
</dbReference>
<dbReference type="InterPro" id="IPR020889">
    <property type="entry name" value="LipoPS_assembly_LptD"/>
</dbReference>
<dbReference type="InterPro" id="IPR050218">
    <property type="entry name" value="LptD"/>
</dbReference>
<dbReference type="InterPro" id="IPR007543">
    <property type="entry name" value="LptD_C"/>
</dbReference>
<dbReference type="InterPro" id="IPR005653">
    <property type="entry name" value="OstA-like_N"/>
</dbReference>
<dbReference type="NCBIfam" id="NF002997">
    <property type="entry name" value="PRK03761.1"/>
    <property type="match status" value="1"/>
</dbReference>
<dbReference type="PANTHER" id="PTHR30189">
    <property type="entry name" value="LPS-ASSEMBLY PROTEIN"/>
    <property type="match status" value="1"/>
</dbReference>
<dbReference type="PANTHER" id="PTHR30189:SF1">
    <property type="entry name" value="LPS-ASSEMBLY PROTEIN LPTD"/>
    <property type="match status" value="1"/>
</dbReference>
<dbReference type="Pfam" id="PF04453">
    <property type="entry name" value="LptD"/>
    <property type="match status" value="1"/>
</dbReference>
<dbReference type="Pfam" id="PF03968">
    <property type="entry name" value="LptD_N"/>
    <property type="match status" value="1"/>
</dbReference>
<comment type="function">
    <text evidence="1">Together with LptE, is involved in the assembly of lipopolysaccharide (LPS) at the surface of the outer membrane.</text>
</comment>
<comment type="subunit">
    <text evidence="1">Component of the lipopolysaccharide transport and assembly complex. Interacts with LptE and LptA.</text>
</comment>
<comment type="subcellular location">
    <subcellularLocation>
        <location evidence="1">Cell outer membrane</location>
    </subcellularLocation>
</comment>
<comment type="PTM">
    <text evidence="1">Contains two intramolecular disulfide bonds.</text>
</comment>
<comment type="similarity">
    <text evidence="1">Belongs to the LptD family.</text>
</comment>
<sequence length="784" mass="89685">MKKRIPTLLATMIATALYSQQGLAADLASQCMLGVPSYDRPLVQGDTNDLPVTINADHAKGDYPDDAVFTGSVDIMQGNSRLQADEVQLHQKEAPGQPEPVRTVDALGNVHYDDNQVILKGPKGWANLNTKDTNVWEGDYQMVGRQGRGKADLMKQRGENRYTILDNGSFTSCLPGSDTWSVVGSEIIHDREEQVAEIWNARFKVGPVPIFYSPYLQLPVGDKRRSGFLIPNAKYTTTNYFEFYLPYYWNIAPNMDATITPHYMHRRGNIMWENEFRYLSQAGAGLMELDYLPSDKVYEDEHPNDDSSRRWLFYWQHSGVMDQVWRFNVDYTKVSDPSYFNDFDNKYGSSTDGYATQKFSVGYAVQNFNATVSTKQFQVFSEQNTSSYSAEPQLDVNYYQNDVGPFDTRIYGQAVHFVNTRDDMPEATRVHLEPTINLPLSNNWGSINTEAKLLATHYQQTNLDWYNSRNTTKLDESVNRVMPQFKVDGKMVFERDMEMLAPGYTQTLEPRAQYLYVPYRDQSDIYNYDSSLLQSDYSGLFRDRTYGGLDRIASANQVTTGVTSRIYDDAAVERFNISVGQIYYFTESRTGDDNITWENDDKTGSLVWAGDTYWRISERWGLRGGIQYDTRLDNVATSNSSIEYRRDEDRLVQLNYRYASPEYIQATLPKYYSTAEQYKNGISQVGAVASWPIADRWSIVGAYYYDTNANKQADSMLGVQYSSCCYAIRVGYERKLNGWDNDKQHAVYDNAIGFNIELRGLSSNYGLGTQEMLRSNILPYQNTL</sequence>
<proteinExistence type="inferred from homology"/>
<reference key="1">
    <citation type="journal article" date="2005" name="Nucleic Acids Res.">
        <title>Genome dynamics and diversity of Shigella species, the etiologic agents of bacillary dysentery.</title>
        <authorList>
            <person name="Yang F."/>
            <person name="Yang J."/>
            <person name="Zhang X."/>
            <person name="Chen L."/>
            <person name="Jiang Y."/>
            <person name="Yan Y."/>
            <person name="Tang X."/>
            <person name="Wang J."/>
            <person name="Xiong Z."/>
            <person name="Dong J."/>
            <person name="Xue Y."/>
            <person name="Zhu Y."/>
            <person name="Xu X."/>
            <person name="Sun L."/>
            <person name="Chen S."/>
            <person name="Nie H."/>
            <person name="Peng J."/>
            <person name="Xu J."/>
            <person name="Wang Y."/>
            <person name="Yuan Z."/>
            <person name="Wen Y."/>
            <person name="Yao Z."/>
            <person name="Shen Y."/>
            <person name="Qiang B."/>
            <person name="Hou Y."/>
            <person name="Yu J."/>
            <person name="Jin Q."/>
        </authorList>
    </citation>
    <scope>NUCLEOTIDE SEQUENCE [LARGE SCALE GENOMIC DNA]</scope>
    <source>
        <strain>Sb227</strain>
    </source>
</reference>
<evidence type="ECO:0000255" key="1">
    <source>
        <dbReference type="HAMAP-Rule" id="MF_01411"/>
    </source>
</evidence>
<feature type="signal peptide" evidence="1">
    <location>
        <begin position="1"/>
        <end position="24"/>
    </location>
</feature>
<feature type="chain" id="PRO_0000281635" description="LPS-assembly protein LptD">
    <location>
        <begin position="25"/>
        <end position="784"/>
    </location>
</feature>
<feature type="disulfide bond" evidence="1">
    <location>
        <begin position="31"/>
        <end position="724"/>
    </location>
</feature>
<feature type="disulfide bond" evidence="1">
    <location>
        <begin position="173"/>
        <end position="725"/>
    </location>
</feature>
<organism>
    <name type="scientific">Shigella boydii serotype 4 (strain Sb227)</name>
    <dbReference type="NCBI Taxonomy" id="300268"/>
    <lineage>
        <taxon>Bacteria</taxon>
        <taxon>Pseudomonadati</taxon>
        <taxon>Pseudomonadota</taxon>
        <taxon>Gammaproteobacteria</taxon>
        <taxon>Enterobacterales</taxon>
        <taxon>Enterobacteriaceae</taxon>
        <taxon>Shigella</taxon>
    </lineage>
</organism>
<accession>Q326H9</accession>
<protein>
    <recommendedName>
        <fullName evidence="1">LPS-assembly protein LptD</fullName>
    </recommendedName>
</protein>
<gene>
    <name evidence="1" type="primary">lptD</name>
    <name type="synonym">imp</name>
    <name type="synonym">ostA</name>
    <name type="ordered locus">SBO_0043</name>
</gene>
<name>LPTD_SHIBS</name>
<keyword id="KW-0998">Cell outer membrane</keyword>
<keyword id="KW-1015">Disulfide bond</keyword>
<keyword id="KW-0472">Membrane</keyword>
<keyword id="KW-0732">Signal</keyword>